<evidence type="ECO:0000250" key="1"/>
<evidence type="ECO:0000250" key="2">
    <source>
        <dbReference type="UniProtKB" id="P30288"/>
    </source>
</evidence>
<evidence type="ECO:0000255" key="3"/>
<evidence type="ECO:0000305" key="4"/>
<evidence type="ECO:0000305" key="5">
    <source>
    </source>
</evidence>
<reference key="1">
    <citation type="journal article" date="2010" name="Zoology">
        <title>Transcriptome analysis of the venom glands of the Chinese wolf spider Lycosa singoriensis.</title>
        <authorList>
            <person name="Zhang Y."/>
            <person name="Chen J."/>
            <person name="Tang X."/>
            <person name="Wang F."/>
            <person name="Jiang L."/>
            <person name="Xiong X."/>
            <person name="Wang M."/>
            <person name="Rong M."/>
            <person name="Liu Z."/>
            <person name="Liang S."/>
        </authorList>
    </citation>
    <scope>NUCLEOTIDE SEQUENCE [LARGE SCALE MRNA]</scope>
    <source>
        <tissue>Venom gland</tissue>
    </source>
</reference>
<organism>
    <name type="scientific">Lycosa singoriensis</name>
    <name type="common">Wolf spider</name>
    <name type="synonym">Aranea singoriensis</name>
    <dbReference type="NCBI Taxonomy" id="434756"/>
    <lineage>
        <taxon>Eukaryota</taxon>
        <taxon>Metazoa</taxon>
        <taxon>Ecdysozoa</taxon>
        <taxon>Arthropoda</taxon>
        <taxon>Chelicerata</taxon>
        <taxon>Arachnida</taxon>
        <taxon>Araneae</taxon>
        <taxon>Araneomorphae</taxon>
        <taxon>Entelegynae</taxon>
        <taxon>Lycosoidea</taxon>
        <taxon>Lycosidae</taxon>
        <taxon>Lycosa</taxon>
    </lineage>
</organism>
<protein>
    <recommendedName>
        <fullName evidence="4">U19-lycotoxin-Ls1a</fullName>
        <shortName evidence="4">U19-LCTX-Ls1a</shortName>
    </recommendedName>
    <alternativeName>
        <fullName>Toxin-like structure LSTX-P5</fullName>
    </alternativeName>
</protein>
<dbReference type="EMBL" id="EU926140">
    <property type="protein sequence ID" value="ACI41472.1"/>
    <property type="molecule type" value="mRNA"/>
</dbReference>
<dbReference type="EMBL" id="FM864144">
    <property type="protein sequence ID" value="CAS03741.1"/>
    <property type="molecule type" value="mRNA"/>
</dbReference>
<dbReference type="SMR" id="B6DD56"/>
<dbReference type="ArachnoServer" id="AS001079">
    <property type="toxin name" value="U19-lycotoxin-Ls1a"/>
</dbReference>
<dbReference type="GO" id="GO:0005576">
    <property type="term" value="C:extracellular region"/>
    <property type="evidence" value="ECO:0007669"/>
    <property type="project" value="UniProtKB-SubCell"/>
</dbReference>
<dbReference type="GO" id="GO:0008200">
    <property type="term" value="F:ion channel inhibitor activity"/>
    <property type="evidence" value="ECO:0007669"/>
    <property type="project" value="InterPro"/>
</dbReference>
<dbReference type="GO" id="GO:0090729">
    <property type="term" value="F:toxin activity"/>
    <property type="evidence" value="ECO:0007669"/>
    <property type="project" value="UniProtKB-KW"/>
</dbReference>
<dbReference type="CDD" id="cd12960">
    <property type="entry name" value="Spider_toxin"/>
    <property type="match status" value="1"/>
</dbReference>
<dbReference type="Gene3D" id="4.10.40.10">
    <property type="match status" value="1"/>
</dbReference>
<dbReference type="InterPro" id="IPR004169">
    <property type="entry name" value="Spidertoxin"/>
</dbReference>
<dbReference type="Pfam" id="PF02819">
    <property type="entry name" value="Toxin_9"/>
    <property type="match status" value="1"/>
</dbReference>
<dbReference type="SUPFAM" id="SSF57059">
    <property type="entry name" value="omega toxin-like"/>
    <property type="match status" value="1"/>
</dbReference>
<comment type="subcellular location">
    <subcellularLocation>
        <location evidence="5">Secreted</location>
    </subcellularLocation>
</comment>
<comment type="tissue specificity">
    <text evidence="5">Expressed by the venom gland.</text>
</comment>
<comment type="domain">
    <text evidence="2">The presence of a 'disulfide through disulfide knot' structurally defines this protein as a knottin.</text>
</comment>
<comment type="similarity">
    <text evidence="4">Belongs to the neurotoxin 02 (plectoxin) family. 05 (U19-lycotoxin) subfamily.</text>
</comment>
<keyword id="KW-1015">Disulfide bond</keyword>
<keyword id="KW-0960">Knottin</keyword>
<keyword id="KW-0964">Secreted</keyword>
<keyword id="KW-0732">Signal</keyword>
<keyword id="KW-0800">Toxin</keyword>
<feature type="signal peptide" evidence="3">
    <location>
        <begin position="1"/>
        <end position="22"/>
    </location>
</feature>
<feature type="propeptide" id="PRO_0000401903" evidence="1">
    <location>
        <begin position="23"/>
        <end position="34"/>
    </location>
</feature>
<feature type="chain" id="PRO_0000401904" description="U19-lycotoxin-Ls1a">
    <location>
        <begin position="35"/>
        <end position="80"/>
    </location>
</feature>
<feature type="disulfide bond" evidence="2">
    <location>
        <begin position="36"/>
        <end position="50"/>
    </location>
</feature>
<feature type="disulfide bond" evidence="2">
    <location>
        <begin position="43"/>
        <end position="55"/>
    </location>
</feature>
<feature type="disulfide bond" evidence="2">
    <location>
        <begin position="49"/>
        <end position="66"/>
    </location>
</feature>
<feature type="disulfide bond" evidence="2">
    <location>
        <begin position="57"/>
        <end position="64"/>
    </location>
</feature>
<sequence length="80" mass="8945">MSPKVQALIFIVGLITLLAAHAQEELSDNIESERGCSGAYKRCSSSQRCCEGRPCVCSAINSNCKCRKTYTELFKEYFEK</sequence>
<accession>B6DD56</accession>
<proteinExistence type="inferred from homology"/>
<name>TXJ05_LYCSI</name>